<name>RPOY_STRZJ</name>
<organism>
    <name type="scientific">Streptococcus pneumoniae (strain JJA)</name>
    <dbReference type="NCBI Taxonomy" id="488222"/>
    <lineage>
        <taxon>Bacteria</taxon>
        <taxon>Bacillati</taxon>
        <taxon>Bacillota</taxon>
        <taxon>Bacilli</taxon>
        <taxon>Lactobacillales</taxon>
        <taxon>Streptococcaceae</taxon>
        <taxon>Streptococcus</taxon>
    </lineage>
</organism>
<protein>
    <recommendedName>
        <fullName evidence="1">DNA-directed RNA polymerase subunit epsilon</fullName>
        <shortName evidence="1">RNAP epsilon subunit</shortName>
        <ecNumber evidence="1">2.7.7.6</ecNumber>
    </recommendedName>
    <alternativeName>
        <fullName evidence="1">RNA polymerase epsilon subunit</fullName>
    </alternativeName>
    <alternativeName>
        <fullName evidence="1">Transcriptase subunit epsilon</fullName>
    </alternativeName>
</protein>
<feature type="chain" id="PRO_1000185340" description="DNA-directed RNA polymerase subunit epsilon">
    <location>
        <begin position="1"/>
        <end position="77"/>
    </location>
</feature>
<gene>
    <name evidence="1" type="primary">rpoY</name>
    <name type="ordered locus">SPJ_0156</name>
</gene>
<sequence length="77" mass="9258">MIYKVFYQETKERSPRRETTRALYLDIDASSELEGRITARQLVEENRPEYNIEYIELLSDKLLDYEKETGAFEITEF</sequence>
<accession>C1CBU5</accession>
<proteinExistence type="inferred from homology"/>
<dbReference type="EC" id="2.7.7.6" evidence="1"/>
<dbReference type="EMBL" id="CP000919">
    <property type="protein sequence ID" value="ACO20064.1"/>
    <property type="molecule type" value="Genomic_DNA"/>
</dbReference>
<dbReference type="RefSeq" id="WP_000639577.1">
    <property type="nucleotide sequence ID" value="NC_012466.1"/>
</dbReference>
<dbReference type="SMR" id="C1CBU5"/>
<dbReference type="KEGG" id="sjj:SPJ_0156"/>
<dbReference type="HOGENOM" id="CLU_187518_0_0_9"/>
<dbReference type="Proteomes" id="UP000002206">
    <property type="component" value="Chromosome"/>
</dbReference>
<dbReference type="GO" id="GO:0000428">
    <property type="term" value="C:DNA-directed RNA polymerase complex"/>
    <property type="evidence" value="ECO:0007669"/>
    <property type="project" value="UniProtKB-KW"/>
</dbReference>
<dbReference type="GO" id="GO:0003677">
    <property type="term" value="F:DNA binding"/>
    <property type="evidence" value="ECO:0007669"/>
    <property type="project" value="UniProtKB-UniRule"/>
</dbReference>
<dbReference type="GO" id="GO:0003899">
    <property type="term" value="F:DNA-directed RNA polymerase activity"/>
    <property type="evidence" value="ECO:0007669"/>
    <property type="project" value="UniProtKB-UniRule"/>
</dbReference>
<dbReference type="GO" id="GO:0006351">
    <property type="term" value="P:DNA-templated transcription"/>
    <property type="evidence" value="ECO:0007669"/>
    <property type="project" value="UniProtKB-UniRule"/>
</dbReference>
<dbReference type="Gene3D" id="3.10.20.730">
    <property type="entry name" value="RNAP, epsilon subunit-like"/>
    <property type="match status" value="1"/>
</dbReference>
<dbReference type="HAMAP" id="MF_01553">
    <property type="entry name" value="RNApol_bact_RpoY"/>
    <property type="match status" value="1"/>
</dbReference>
<dbReference type="InterPro" id="IPR009907">
    <property type="entry name" value="RpoY"/>
</dbReference>
<dbReference type="NCBIfam" id="NF010188">
    <property type="entry name" value="PRK13667.1"/>
    <property type="match status" value="1"/>
</dbReference>
<dbReference type="Pfam" id="PF07288">
    <property type="entry name" value="RpoY"/>
    <property type="match status" value="1"/>
</dbReference>
<comment type="function">
    <text evidence="1">A non-essential component of RNA polymerase (RNAP).</text>
</comment>
<comment type="catalytic activity">
    <reaction evidence="1">
        <text>RNA(n) + a ribonucleoside 5'-triphosphate = RNA(n+1) + diphosphate</text>
        <dbReference type="Rhea" id="RHEA:21248"/>
        <dbReference type="Rhea" id="RHEA-COMP:14527"/>
        <dbReference type="Rhea" id="RHEA-COMP:17342"/>
        <dbReference type="ChEBI" id="CHEBI:33019"/>
        <dbReference type="ChEBI" id="CHEBI:61557"/>
        <dbReference type="ChEBI" id="CHEBI:140395"/>
        <dbReference type="EC" id="2.7.7.6"/>
    </reaction>
</comment>
<comment type="subunit">
    <text evidence="1">RNAP is composed of a core of 2 alpha, a beta and a beta' subunit. The core is associated with a delta subunit, and at least one of epsilon or omega. When a sigma factor is associated with the core the holoenzyme is formed, which can initiate transcription.</text>
</comment>
<comment type="similarity">
    <text evidence="1">Belongs to the RNA polymerase subunit epsilon family.</text>
</comment>
<evidence type="ECO:0000255" key="1">
    <source>
        <dbReference type="HAMAP-Rule" id="MF_01553"/>
    </source>
</evidence>
<reference key="1">
    <citation type="journal article" date="2010" name="Genome Biol.">
        <title>Structure and dynamics of the pan-genome of Streptococcus pneumoniae and closely related species.</title>
        <authorList>
            <person name="Donati C."/>
            <person name="Hiller N.L."/>
            <person name="Tettelin H."/>
            <person name="Muzzi A."/>
            <person name="Croucher N.J."/>
            <person name="Angiuoli S.V."/>
            <person name="Oggioni M."/>
            <person name="Dunning Hotopp J.C."/>
            <person name="Hu F.Z."/>
            <person name="Riley D.R."/>
            <person name="Covacci A."/>
            <person name="Mitchell T.J."/>
            <person name="Bentley S.D."/>
            <person name="Kilian M."/>
            <person name="Ehrlich G.D."/>
            <person name="Rappuoli R."/>
            <person name="Moxon E.R."/>
            <person name="Masignani V."/>
        </authorList>
    </citation>
    <scope>NUCLEOTIDE SEQUENCE [LARGE SCALE GENOMIC DNA]</scope>
    <source>
        <strain>JJA</strain>
    </source>
</reference>
<keyword id="KW-0240">DNA-directed RNA polymerase</keyword>
<keyword id="KW-0548">Nucleotidyltransferase</keyword>
<keyword id="KW-0804">Transcription</keyword>
<keyword id="KW-0808">Transferase</keyword>